<feature type="chain" id="PRO_1000203873" description="Methionyl-tRNA formyltransferase">
    <location>
        <begin position="1"/>
        <end position="307"/>
    </location>
</feature>
<feature type="binding site" evidence="1">
    <location>
        <begin position="110"/>
        <end position="113"/>
    </location>
    <ligand>
        <name>(6S)-5,6,7,8-tetrahydrofolate</name>
        <dbReference type="ChEBI" id="CHEBI:57453"/>
    </ligand>
</feature>
<evidence type="ECO:0000255" key="1">
    <source>
        <dbReference type="HAMAP-Rule" id="MF_00182"/>
    </source>
</evidence>
<reference key="1">
    <citation type="submission" date="2005-03" db="EMBL/GenBank/DDBJ databases">
        <title>Comparison of the complete genome sequences of Rhodococcus erythropolis PR4 and Rhodococcus opacus B4.</title>
        <authorList>
            <person name="Takarada H."/>
            <person name="Sekine M."/>
            <person name="Hosoyama A."/>
            <person name="Yamada R."/>
            <person name="Fujisawa T."/>
            <person name="Omata S."/>
            <person name="Shimizu A."/>
            <person name="Tsukatani N."/>
            <person name="Tanikawa S."/>
            <person name="Fujita N."/>
            <person name="Harayama S."/>
        </authorList>
    </citation>
    <scope>NUCLEOTIDE SEQUENCE [LARGE SCALE GENOMIC DNA]</scope>
    <source>
        <strain>PR4 / NBRC 100887</strain>
    </source>
</reference>
<gene>
    <name evidence="1" type="primary">fmt</name>
    <name type="ordered locus">RER_30160</name>
</gene>
<comment type="function">
    <text evidence="1">Attaches a formyl group to the free amino group of methionyl-tRNA(fMet). The formyl group appears to play a dual role in the initiator identity of N-formylmethionyl-tRNA by promoting its recognition by IF2 and preventing the misappropriation of this tRNA by the elongation apparatus.</text>
</comment>
<comment type="catalytic activity">
    <reaction evidence="1">
        <text>L-methionyl-tRNA(fMet) + (6R)-10-formyltetrahydrofolate = N-formyl-L-methionyl-tRNA(fMet) + (6S)-5,6,7,8-tetrahydrofolate + H(+)</text>
        <dbReference type="Rhea" id="RHEA:24380"/>
        <dbReference type="Rhea" id="RHEA-COMP:9952"/>
        <dbReference type="Rhea" id="RHEA-COMP:9953"/>
        <dbReference type="ChEBI" id="CHEBI:15378"/>
        <dbReference type="ChEBI" id="CHEBI:57453"/>
        <dbReference type="ChEBI" id="CHEBI:78530"/>
        <dbReference type="ChEBI" id="CHEBI:78844"/>
        <dbReference type="ChEBI" id="CHEBI:195366"/>
        <dbReference type="EC" id="2.1.2.9"/>
    </reaction>
</comment>
<comment type="similarity">
    <text evidence="1">Belongs to the Fmt family.</text>
</comment>
<name>FMT_RHOE4</name>
<keyword id="KW-0648">Protein biosynthesis</keyword>
<keyword id="KW-0808">Transferase</keyword>
<dbReference type="EC" id="2.1.2.9" evidence="1"/>
<dbReference type="EMBL" id="AP008957">
    <property type="protein sequence ID" value="BAH33724.1"/>
    <property type="molecule type" value="Genomic_DNA"/>
</dbReference>
<dbReference type="RefSeq" id="WP_020907709.1">
    <property type="nucleotide sequence ID" value="NC_012490.1"/>
</dbReference>
<dbReference type="SMR" id="C0ZZD9"/>
<dbReference type="GeneID" id="57487044"/>
<dbReference type="KEGG" id="rer:RER_30160"/>
<dbReference type="eggNOG" id="COG0223">
    <property type="taxonomic scope" value="Bacteria"/>
</dbReference>
<dbReference type="HOGENOM" id="CLU_033347_1_0_11"/>
<dbReference type="Proteomes" id="UP000002204">
    <property type="component" value="Chromosome"/>
</dbReference>
<dbReference type="GO" id="GO:0005829">
    <property type="term" value="C:cytosol"/>
    <property type="evidence" value="ECO:0007669"/>
    <property type="project" value="TreeGrafter"/>
</dbReference>
<dbReference type="GO" id="GO:0004479">
    <property type="term" value="F:methionyl-tRNA formyltransferase activity"/>
    <property type="evidence" value="ECO:0007669"/>
    <property type="project" value="UniProtKB-UniRule"/>
</dbReference>
<dbReference type="CDD" id="cd08646">
    <property type="entry name" value="FMT_core_Met-tRNA-FMT_N"/>
    <property type="match status" value="1"/>
</dbReference>
<dbReference type="CDD" id="cd08704">
    <property type="entry name" value="Met_tRNA_FMT_C"/>
    <property type="match status" value="1"/>
</dbReference>
<dbReference type="FunFam" id="3.40.50.12230:FF:000001">
    <property type="entry name" value="Methionyl-tRNA formyltransferase"/>
    <property type="match status" value="1"/>
</dbReference>
<dbReference type="Gene3D" id="3.40.50.12230">
    <property type="match status" value="1"/>
</dbReference>
<dbReference type="HAMAP" id="MF_00182">
    <property type="entry name" value="Formyl_trans"/>
    <property type="match status" value="1"/>
</dbReference>
<dbReference type="InterPro" id="IPR005794">
    <property type="entry name" value="Fmt"/>
</dbReference>
<dbReference type="InterPro" id="IPR005793">
    <property type="entry name" value="Formyl_trans_C"/>
</dbReference>
<dbReference type="InterPro" id="IPR002376">
    <property type="entry name" value="Formyl_transf_N"/>
</dbReference>
<dbReference type="InterPro" id="IPR036477">
    <property type="entry name" value="Formyl_transf_N_sf"/>
</dbReference>
<dbReference type="InterPro" id="IPR011034">
    <property type="entry name" value="Formyl_transferase-like_C_sf"/>
</dbReference>
<dbReference type="InterPro" id="IPR044135">
    <property type="entry name" value="Met-tRNA-FMT_C"/>
</dbReference>
<dbReference type="InterPro" id="IPR041711">
    <property type="entry name" value="Met-tRNA-FMT_N"/>
</dbReference>
<dbReference type="NCBIfam" id="TIGR00460">
    <property type="entry name" value="fmt"/>
    <property type="match status" value="1"/>
</dbReference>
<dbReference type="PANTHER" id="PTHR11138">
    <property type="entry name" value="METHIONYL-TRNA FORMYLTRANSFERASE"/>
    <property type="match status" value="1"/>
</dbReference>
<dbReference type="PANTHER" id="PTHR11138:SF5">
    <property type="entry name" value="METHIONYL-TRNA FORMYLTRANSFERASE, MITOCHONDRIAL"/>
    <property type="match status" value="1"/>
</dbReference>
<dbReference type="Pfam" id="PF02911">
    <property type="entry name" value="Formyl_trans_C"/>
    <property type="match status" value="1"/>
</dbReference>
<dbReference type="Pfam" id="PF00551">
    <property type="entry name" value="Formyl_trans_N"/>
    <property type="match status" value="1"/>
</dbReference>
<dbReference type="SUPFAM" id="SSF50486">
    <property type="entry name" value="FMT C-terminal domain-like"/>
    <property type="match status" value="1"/>
</dbReference>
<dbReference type="SUPFAM" id="SSF53328">
    <property type="entry name" value="Formyltransferase"/>
    <property type="match status" value="1"/>
</dbReference>
<organism>
    <name type="scientific">Rhodococcus erythropolis (strain PR4 / NBRC 100887)</name>
    <dbReference type="NCBI Taxonomy" id="234621"/>
    <lineage>
        <taxon>Bacteria</taxon>
        <taxon>Bacillati</taxon>
        <taxon>Actinomycetota</taxon>
        <taxon>Actinomycetes</taxon>
        <taxon>Mycobacteriales</taxon>
        <taxon>Nocardiaceae</taxon>
        <taxon>Rhodococcus</taxon>
        <taxon>Rhodococcus erythropolis group</taxon>
    </lineage>
</organism>
<sequence>MRVVFAGTPEPAVPSLRRLIESANHEVVAVVTRPDAVAGRGRKVTRSPIGLLADEHGIPVLTPVKASDPDFAAELARLEPDCAPVVAYGNLLPQNVLDIPKYGWVNLHFSLLPAWRGAAPVQAAISAGDEVTGASAFRLEAGMDTGPVYGVMTERIRDTDTAGDLLGRLAENGAALLESVLDGLEAGEINAVPQSADGVSYAPKVTVDAARVRWELPARTVDRHIRAVTPAPGAWTMIGDLRVKVGPVTVTDETLAVGEISVRKDGLYIGTATTAVRLGQIQPPGKKLMSAGDWARGARLDAEVRAQ</sequence>
<proteinExistence type="inferred from homology"/>
<protein>
    <recommendedName>
        <fullName evidence="1">Methionyl-tRNA formyltransferase</fullName>
        <ecNumber evidence="1">2.1.2.9</ecNumber>
    </recommendedName>
</protein>
<accession>C0ZZD9</accession>